<keyword id="KW-1003">Cell membrane</keyword>
<keyword id="KW-0472">Membrane</keyword>
<keyword id="KW-1185">Reference proteome</keyword>
<keyword id="KW-0812">Transmembrane</keyword>
<keyword id="KW-1133">Transmembrane helix</keyword>
<evidence type="ECO:0000255" key="1"/>
<evidence type="ECO:0000305" key="2"/>
<protein>
    <recommendedName>
        <fullName>Uncharacterized protein MT2333</fullName>
    </recommendedName>
</protein>
<name>Y2272_MYCTO</name>
<feature type="chain" id="PRO_0000427488" description="Uncharacterized protein MT2333">
    <location>
        <begin position="1"/>
        <end position="122"/>
    </location>
</feature>
<feature type="transmembrane region" description="Helical" evidence="1">
    <location>
        <begin position="33"/>
        <end position="53"/>
    </location>
</feature>
<feature type="transmembrane region" description="Helical" evidence="1">
    <location>
        <begin position="58"/>
        <end position="78"/>
    </location>
</feature>
<feature type="transmembrane region" description="Helical" evidence="1">
    <location>
        <begin position="97"/>
        <end position="117"/>
    </location>
</feature>
<reference key="1">
    <citation type="journal article" date="2002" name="J. Bacteriol.">
        <title>Whole-genome comparison of Mycobacterium tuberculosis clinical and laboratory strains.</title>
        <authorList>
            <person name="Fleischmann R.D."/>
            <person name="Alland D."/>
            <person name="Eisen J.A."/>
            <person name="Carpenter L."/>
            <person name="White O."/>
            <person name="Peterson J.D."/>
            <person name="DeBoy R.T."/>
            <person name="Dodson R.J."/>
            <person name="Gwinn M.L."/>
            <person name="Haft D.H."/>
            <person name="Hickey E.K."/>
            <person name="Kolonay J.F."/>
            <person name="Nelson W.C."/>
            <person name="Umayam L.A."/>
            <person name="Ermolaeva M.D."/>
            <person name="Salzberg S.L."/>
            <person name="Delcher A."/>
            <person name="Utterback T.R."/>
            <person name="Weidman J.F."/>
            <person name="Khouri H.M."/>
            <person name="Gill J."/>
            <person name="Mikula A."/>
            <person name="Bishai W."/>
            <person name="Jacobs W.R. Jr."/>
            <person name="Venter J.C."/>
            <person name="Fraser C.M."/>
        </authorList>
    </citation>
    <scope>NUCLEOTIDE SEQUENCE [LARGE SCALE GENOMIC DNA]</scope>
    <source>
        <strain>CDC 1551 / Oshkosh</strain>
    </source>
</reference>
<organism>
    <name type="scientific">Mycobacterium tuberculosis (strain CDC 1551 / Oshkosh)</name>
    <dbReference type="NCBI Taxonomy" id="83331"/>
    <lineage>
        <taxon>Bacteria</taxon>
        <taxon>Bacillati</taxon>
        <taxon>Actinomycetota</taxon>
        <taxon>Actinomycetes</taxon>
        <taxon>Mycobacteriales</taxon>
        <taxon>Mycobacteriaceae</taxon>
        <taxon>Mycobacterium</taxon>
        <taxon>Mycobacterium tuberculosis complex</taxon>
    </lineage>
</organism>
<gene>
    <name type="ordered locus">MT2333</name>
</gene>
<comment type="subcellular location">
    <subcellularLocation>
        <location evidence="2">Cell membrane</location>
        <topology evidence="2">Multi-pass membrane protein</topology>
    </subcellularLocation>
</comment>
<comment type="similarity">
    <text evidence="2">To E.coli YidH.</text>
</comment>
<proteinExistence type="predicted"/>
<sequence length="122" mass="12994">MADDSNDTATDVEPDYRFTLANERTFLAWQRTALGLLAAAVALVQLVPELTIPGARQVLGVVLAILAILTSGMGLLRWQQADRAMRRHLPLPRHPTPGYLAVGLCVVGVVALALVVAKAITG</sequence>
<accession>P9WLF4</accession>
<accession>L0TAP7</accession>
<accession>P64969</accession>
<accession>Q50691</accession>
<dbReference type="EMBL" id="AE000516">
    <property type="protein sequence ID" value="AAK46616.1"/>
    <property type="molecule type" value="Genomic_DNA"/>
</dbReference>
<dbReference type="PIR" id="D70730">
    <property type="entry name" value="D70730"/>
</dbReference>
<dbReference type="RefSeq" id="WP_003411674.1">
    <property type="nucleotide sequence ID" value="NZ_KK341227.1"/>
</dbReference>
<dbReference type="SMR" id="P9WLF4"/>
<dbReference type="KEGG" id="mtc:MT2333"/>
<dbReference type="PATRIC" id="fig|83331.31.peg.2509"/>
<dbReference type="HOGENOM" id="CLU_053359_4_1_11"/>
<dbReference type="Proteomes" id="UP000001020">
    <property type="component" value="Chromosome"/>
</dbReference>
<dbReference type="GO" id="GO:0005886">
    <property type="term" value="C:plasma membrane"/>
    <property type="evidence" value="ECO:0007669"/>
    <property type="project" value="UniProtKB-SubCell"/>
</dbReference>
<dbReference type="InterPro" id="IPR003807">
    <property type="entry name" value="DUF202"/>
</dbReference>
<dbReference type="InterPro" id="IPR052053">
    <property type="entry name" value="IM_YidH-like"/>
</dbReference>
<dbReference type="PANTHER" id="PTHR34187:SF2">
    <property type="entry name" value="DUF202 DOMAIN-CONTAINING PROTEIN"/>
    <property type="match status" value="1"/>
</dbReference>
<dbReference type="PANTHER" id="PTHR34187">
    <property type="entry name" value="FGR18P"/>
    <property type="match status" value="1"/>
</dbReference>
<dbReference type="Pfam" id="PF02656">
    <property type="entry name" value="DUF202"/>
    <property type="match status" value="1"/>
</dbReference>